<evidence type="ECO:0000255" key="1">
    <source>
        <dbReference type="HAMAP-Rule" id="MF_01445"/>
    </source>
</evidence>
<dbReference type="EC" id="2.3.1.234" evidence="1"/>
<dbReference type="EMBL" id="BA000019">
    <property type="protein sequence ID" value="BAB77634.1"/>
    <property type="molecule type" value="Genomic_DNA"/>
</dbReference>
<dbReference type="PIR" id="AF1820">
    <property type="entry name" value="AF1820"/>
</dbReference>
<dbReference type="RefSeq" id="WP_010994287.1">
    <property type="nucleotide sequence ID" value="NZ_RSCN01000016.1"/>
</dbReference>
<dbReference type="SMR" id="Q8Z0I6"/>
<dbReference type="STRING" id="103690.gene:10492114"/>
<dbReference type="KEGG" id="ana:alr0110"/>
<dbReference type="eggNOG" id="COG0533">
    <property type="taxonomic scope" value="Bacteria"/>
</dbReference>
<dbReference type="OrthoDB" id="9806197at2"/>
<dbReference type="Proteomes" id="UP000002483">
    <property type="component" value="Chromosome"/>
</dbReference>
<dbReference type="GO" id="GO:0005737">
    <property type="term" value="C:cytoplasm"/>
    <property type="evidence" value="ECO:0007669"/>
    <property type="project" value="UniProtKB-SubCell"/>
</dbReference>
<dbReference type="GO" id="GO:0005506">
    <property type="term" value="F:iron ion binding"/>
    <property type="evidence" value="ECO:0007669"/>
    <property type="project" value="UniProtKB-UniRule"/>
</dbReference>
<dbReference type="GO" id="GO:0061711">
    <property type="term" value="F:N(6)-L-threonylcarbamoyladenine synthase activity"/>
    <property type="evidence" value="ECO:0007669"/>
    <property type="project" value="UniProtKB-EC"/>
</dbReference>
<dbReference type="GO" id="GO:0002949">
    <property type="term" value="P:tRNA threonylcarbamoyladenosine modification"/>
    <property type="evidence" value="ECO:0007669"/>
    <property type="project" value="UniProtKB-UniRule"/>
</dbReference>
<dbReference type="CDD" id="cd24133">
    <property type="entry name" value="ASKHA_NBD_TsaD_bac"/>
    <property type="match status" value="1"/>
</dbReference>
<dbReference type="FunFam" id="3.30.420.40:FF:000012">
    <property type="entry name" value="tRNA N6-adenosine threonylcarbamoyltransferase"/>
    <property type="match status" value="1"/>
</dbReference>
<dbReference type="FunFam" id="3.30.420.40:FF:000040">
    <property type="entry name" value="tRNA N6-adenosine threonylcarbamoyltransferase"/>
    <property type="match status" value="1"/>
</dbReference>
<dbReference type="Gene3D" id="3.30.420.40">
    <property type="match status" value="2"/>
</dbReference>
<dbReference type="HAMAP" id="MF_01445">
    <property type="entry name" value="TsaD"/>
    <property type="match status" value="1"/>
</dbReference>
<dbReference type="InterPro" id="IPR043129">
    <property type="entry name" value="ATPase_NBD"/>
</dbReference>
<dbReference type="InterPro" id="IPR000905">
    <property type="entry name" value="Gcp-like_dom"/>
</dbReference>
<dbReference type="InterPro" id="IPR017861">
    <property type="entry name" value="KAE1/TsaD"/>
</dbReference>
<dbReference type="InterPro" id="IPR017860">
    <property type="entry name" value="Peptidase_M22_CS"/>
</dbReference>
<dbReference type="InterPro" id="IPR022450">
    <property type="entry name" value="TsaD"/>
</dbReference>
<dbReference type="NCBIfam" id="TIGR00329">
    <property type="entry name" value="gcp_kae1"/>
    <property type="match status" value="1"/>
</dbReference>
<dbReference type="NCBIfam" id="TIGR03723">
    <property type="entry name" value="T6A_TsaD_YgjD"/>
    <property type="match status" value="1"/>
</dbReference>
<dbReference type="PANTHER" id="PTHR11735">
    <property type="entry name" value="TRNA N6-ADENOSINE THREONYLCARBAMOYLTRANSFERASE"/>
    <property type="match status" value="1"/>
</dbReference>
<dbReference type="PANTHER" id="PTHR11735:SF6">
    <property type="entry name" value="TRNA N6-ADENOSINE THREONYLCARBAMOYLTRANSFERASE, MITOCHONDRIAL"/>
    <property type="match status" value="1"/>
</dbReference>
<dbReference type="Pfam" id="PF00814">
    <property type="entry name" value="TsaD"/>
    <property type="match status" value="1"/>
</dbReference>
<dbReference type="PRINTS" id="PR00789">
    <property type="entry name" value="OSIALOPTASE"/>
</dbReference>
<dbReference type="SUPFAM" id="SSF53067">
    <property type="entry name" value="Actin-like ATPase domain"/>
    <property type="match status" value="2"/>
</dbReference>
<dbReference type="PROSITE" id="PS01016">
    <property type="entry name" value="GLYCOPROTEASE"/>
    <property type="match status" value="1"/>
</dbReference>
<comment type="function">
    <text evidence="1">Required for the formation of a threonylcarbamoyl group on adenosine at position 37 (t(6)A37) in tRNAs that read codons beginning with adenine. Is involved in the transfer of the threonylcarbamoyl moiety of threonylcarbamoyl-AMP (TC-AMP) to the N6 group of A37, together with TsaE and TsaB. TsaD likely plays a direct catalytic role in this reaction.</text>
</comment>
<comment type="catalytic activity">
    <reaction evidence="1">
        <text>L-threonylcarbamoyladenylate + adenosine(37) in tRNA = N(6)-L-threonylcarbamoyladenosine(37) in tRNA + AMP + H(+)</text>
        <dbReference type="Rhea" id="RHEA:37059"/>
        <dbReference type="Rhea" id="RHEA-COMP:10162"/>
        <dbReference type="Rhea" id="RHEA-COMP:10163"/>
        <dbReference type="ChEBI" id="CHEBI:15378"/>
        <dbReference type="ChEBI" id="CHEBI:73682"/>
        <dbReference type="ChEBI" id="CHEBI:74411"/>
        <dbReference type="ChEBI" id="CHEBI:74418"/>
        <dbReference type="ChEBI" id="CHEBI:456215"/>
        <dbReference type="EC" id="2.3.1.234"/>
    </reaction>
</comment>
<comment type="cofactor">
    <cofactor evidence="1">
        <name>Fe(2+)</name>
        <dbReference type="ChEBI" id="CHEBI:29033"/>
    </cofactor>
    <text evidence="1">Binds 1 Fe(2+) ion per subunit.</text>
</comment>
<comment type="subcellular location">
    <subcellularLocation>
        <location evidence="1">Cytoplasm</location>
    </subcellularLocation>
</comment>
<comment type="similarity">
    <text evidence="1">Belongs to the KAE1 / TsaD family.</text>
</comment>
<protein>
    <recommendedName>
        <fullName evidence="1">tRNA N6-adenosine threonylcarbamoyltransferase</fullName>
        <ecNumber evidence="1">2.3.1.234</ecNumber>
    </recommendedName>
    <alternativeName>
        <fullName evidence="1">N6-L-threonylcarbamoyladenine synthase</fullName>
        <shortName evidence="1">t(6)A synthase</shortName>
    </alternativeName>
    <alternativeName>
        <fullName evidence="1">t(6)A37 threonylcarbamoyladenosine biosynthesis protein TsaD</fullName>
    </alternativeName>
    <alternativeName>
        <fullName evidence="1">tRNA threonylcarbamoyladenosine biosynthesis protein TsaD</fullName>
    </alternativeName>
</protein>
<reference key="1">
    <citation type="journal article" date="2001" name="DNA Res.">
        <title>Complete genomic sequence of the filamentous nitrogen-fixing cyanobacterium Anabaena sp. strain PCC 7120.</title>
        <authorList>
            <person name="Kaneko T."/>
            <person name="Nakamura Y."/>
            <person name="Wolk C.P."/>
            <person name="Kuritz T."/>
            <person name="Sasamoto S."/>
            <person name="Watanabe A."/>
            <person name="Iriguchi M."/>
            <person name="Ishikawa A."/>
            <person name="Kawashima K."/>
            <person name="Kimura T."/>
            <person name="Kishida Y."/>
            <person name="Kohara M."/>
            <person name="Matsumoto M."/>
            <person name="Matsuno A."/>
            <person name="Muraki A."/>
            <person name="Nakazaki N."/>
            <person name="Shimpo S."/>
            <person name="Sugimoto M."/>
            <person name="Takazawa M."/>
            <person name="Yamada M."/>
            <person name="Yasuda M."/>
            <person name="Tabata S."/>
        </authorList>
    </citation>
    <scope>NUCLEOTIDE SEQUENCE [LARGE SCALE GENOMIC DNA]</scope>
    <source>
        <strain>PCC 7120 / SAG 25.82 / UTEX 2576</strain>
    </source>
</reference>
<proteinExistence type="inferred from homology"/>
<organism>
    <name type="scientific">Nostoc sp. (strain PCC 7120 / SAG 25.82 / UTEX 2576)</name>
    <dbReference type="NCBI Taxonomy" id="103690"/>
    <lineage>
        <taxon>Bacteria</taxon>
        <taxon>Bacillati</taxon>
        <taxon>Cyanobacteriota</taxon>
        <taxon>Cyanophyceae</taxon>
        <taxon>Nostocales</taxon>
        <taxon>Nostocaceae</taxon>
        <taxon>Nostoc</taxon>
    </lineage>
</organism>
<feature type="chain" id="PRO_0000303252" description="tRNA N6-adenosine threonylcarbamoyltransferase">
    <location>
        <begin position="1"/>
        <end position="346"/>
    </location>
</feature>
<feature type="binding site" evidence="1">
    <location>
        <position position="111"/>
    </location>
    <ligand>
        <name>Fe cation</name>
        <dbReference type="ChEBI" id="CHEBI:24875"/>
    </ligand>
</feature>
<feature type="binding site" evidence="1">
    <location>
        <position position="115"/>
    </location>
    <ligand>
        <name>Fe cation</name>
        <dbReference type="ChEBI" id="CHEBI:24875"/>
    </ligand>
</feature>
<feature type="binding site" evidence="1">
    <location>
        <begin position="134"/>
        <end position="138"/>
    </location>
    <ligand>
        <name>substrate</name>
    </ligand>
</feature>
<feature type="binding site" evidence="1">
    <location>
        <position position="167"/>
    </location>
    <ligand>
        <name>substrate</name>
    </ligand>
</feature>
<feature type="binding site" evidence="1">
    <location>
        <position position="180"/>
    </location>
    <ligand>
        <name>substrate</name>
    </ligand>
</feature>
<feature type="binding site" evidence="1">
    <location>
        <position position="184"/>
    </location>
    <ligand>
        <name>substrate</name>
    </ligand>
</feature>
<feature type="binding site" evidence="1">
    <location>
        <position position="279"/>
    </location>
    <ligand>
        <name>substrate</name>
    </ligand>
</feature>
<feature type="binding site" evidence="1">
    <location>
        <position position="307"/>
    </location>
    <ligand>
        <name>Fe cation</name>
        <dbReference type="ChEBI" id="CHEBI:24875"/>
    </ligand>
</feature>
<gene>
    <name evidence="1" type="primary">tsaD</name>
    <name type="synonym">gcp</name>
    <name type="ordered locus">alr0110</name>
</gene>
<sequence length="346" mass="36273">MTTVLAIETSCDETAVAIVNNRQVLSSIIASQISVHQQYGGVVPEVASRAHLETINGAIAQAMDQAQLGWDKIDAIAATCAPGLVGALLVGLTAAKTLAILHNKPFLGVHHLEGHIYATYLSEPTLDPPFLSLLVSGGHTSLIYVKECGRYESLGETRDDAAGEAFDKVARLLKLGYPGGPVIDKLAQTGNPQAFALPEGKVSLPGGGYHPYDGSFSGLKTAVLRLVQQLEKDGDSLPLEDIAASFQATVAKALTKRAIACALDYGLDTIAVGGGVAANSGLRQHLQAATAANNLRVLFPPLKFCTDNAAMIACAAVDHLSRGHTSPITLGVESRLSLSQVMKLYQ</sequence>
<accession>Q8Z0I6</accession>
<keyword id="KW-0012">Acyltransferase</keyword>
<keyword id="KW-0963">Cytoplasm</keyword>
<keyword id="KW-0408">Iron</keyword>
<keyword id="KW-0479">Metal-binding</keyword>
<keyword id="KW-1185">Reference proteome</keyword>
<keyword id="KW-0808">Transferase</keyword>
<keyword id="KW-0819">tRNA processing</keyword>
<name>TSAD_NOSS1</name>